<protein>
    <recommendedName>
        <fullName evidence="1">Large ribosomal subunit protein uL14c</fullName>
    </recommendedName>
    <alternativeName>
        <fullName evidence="2">50S ribosomal protein L14, chloroplastic</fullName>
    </alternativeName>
</protein>
<evidence type="ECO:0000255" key="1">
    <source>
        <dbReference type="HAMAP-Rule" id="MF_01367"/>
    </source>
</evidence>
<evidence type="ECO:0000305" key="2"/>
<comment type="function">
    <text evidence="1">Binds to 23S rRNA.</text>
</comment>
<comment type="subunit">
    <text evidence="1">Part of the 50S ribosomal subunit.</text>
</comment>
<comment type="subcellular location">
    <subcellularLocation>
        <location>Plastid</location>
        <location>Chloroplast</location>
    </subcellularLocation>
</comment>
<comment type="similarity">
    <text evidence="1">Belongs to the universal ribosomal protein uL14 family.</text>
</comment>
<accession>A4QJW7</accession>
<sequence length="122" mass="13582">MIQPQTYLNVADNSGARELMCIRIIGASNRRYAHIGDVIVAVIKEAIPNTPLERSEVIRAVIVRTCKELKRNNGTIIRYDDNAAVVIDQEGNPKGTRVFGAIPRELRQLNFTKIVSLAPEVL</sequence>
<gene>
    <name evidence="1" type="primary">rpl14</name>
</gene>
<organism>
    <name type="scientific">Olimarabidopsis pumila</name>
    <name type="common">Dwarf rocket</name>
    <name type="synonym">Arabidopsis griffithiana</name>
    <dbReference type="NCBI Taxonomy" id="74718"/>
    <lineage>
        <taxon>Eukaryota</taxon>
        <taxon>Viridiplantae</taxon>
        <taxon>Streptophyta</taxon>
        <taxon>Embryophyta</taxon>
        <taxon>Tracheophyta</taxon>
        <taxon>Spermatophyta</taxon>
        <taxon>Magnoliopsida</taxon>
        <taxon>eudicotyledons</taxon>
        <taxon>Gunneridae</taxon>
        <taxon>Pentapetalae</taxon>
        <taxon>rosids</taxon>
        <taxon>malvids</taxon>
        <taxon>Brassicales</taxon>
        <taxon>Brassicaceae</taxon>
        <taxon>Alyssopsideae</taxon>
        <taxon>Olimarabidopsis</taxon>
    </lineage>
</organism>
<reference key="1">
    <citation type="submission" date="2007-03" db="EMBL/GenBank/DDBJ databases">
        <title>Sequence analysis of Arabidopsis pumila JS2 chloroplast DNA.</title>
        <authorList>
            <person name="Hosouchi T."/>
            <person name="Tsuruoka H."/>
            <person name="Kotani H."/>
        </authorList>
    </citation>
    <scope>NUCLEOTIDE SEQUENCE [LARGE SCALE GENOMIC DNA]</scope>
</reference>
<keyword id="KW-0150">Chloroplast</keyword>
<keyword id="KW-0934">Plastid</keyword>
<keyword id="KW-0687">Ribonucleoprotein</keyword>
<keyword id="KW-0689">Ribosomal protein</keyword>
<keyword id="KW-0694">RNA-binding</keyword>
<keyword id="KW-0699">rRNA-binding</keyword>
<feature type="chain" id="PRO_0000355898" description="Large ribosomal subunit protein uL14c">
    <location>
        <begin position="1"/>
        <end position="122"/>
    </location>
</feature>
<dbReference type="EMBL" id="AP009368">
    <property type="protein sequence ID" value="BAF49975.1"/>
    <property type="molecule type" value="Genomic_DNA"/>
</dbReference>
<dbReference type="RefSeq" id="YP_001123151.1">
    <property type="nucleotide sequence ID" value="NC_009267.1"/>
</dbReference>
<dbReference type="SMR" id="A4QJW7"/>
<dbReference type="GeneID" id="4962452"/>
<dbReference type="GO" id="GO:0009507">
    <property type="term" value="C:chloroplast"/>
    <property type="evidence" value="ECO:0007669"/>
    <property type="project" value="UniProtKB-SubCell"/>
</dbReference>
<dbReference type="GO" id="GO:0022625">
    <property type="term" value="C:cytosolic large ribosomal subunit"/>
    <property type="evidence" value="ECO:0007669"/>
    <property type="project" value="TreeGrafter"/>
</dbReference>
<dbReference type="GO" id="GO:0070180">
    <property type="term" value="F:large ribosomal subunit rRNA binding"/>
    <property type="evidence" value="ECO:0007669"/>
    <property type="project" value="TreeGrafter"/>
</dbReference>
<dbReference type="GO" id="GO:0003735">
    <property type="term" value="F:structural constituent of ribosome"/>
    <property type="evidence" value="ECO:0007669"/>
    <property type="project" value="InterPro"/>
</dbReference>
<dbReference type="GO" id="GO:0006412">
    <property type="term" value="P:translation"/>
    <property type="evidence" value="ECO:0007669"/>
    <property type="project" value="UniProtKB-UniRule"/>
</dbReference>
<dbReference type="CDD" id="cd00337">
    <property type="entry name" value="Ribosomal_uL14"/>
    <property type="match status" value="1"/>
</dbReference>
<dbReference type="FunFam" id="2.40.150.20:FF:000002">
    <property type="entry name" value="50S ribosomal protein L14, chloroplastic"/>
    <property type="match status" value="1"/>
</dbReference>
<dbReference type="Gene3D" id="2.40.150.20">
    <property type="entry name" value="Ribosomal protein L14"/>
    <property type="match status" value="1"/>
</dbReference>
<dbReference type="HAMAP" id="MF_01367">
    <property type="entry name" value="Ribosomal_uL14"/>
    <property type="match status" value="1"/>
</dbReference>
<dbReference type="InterPro" id="IPR000218">
    <property type="entry name" value="Ribosomal_uL14"/>
</dbReference>
<dbReference type="InterPro" id="IPR005745">
    <property type="entry name" value="Ribosomal_uL14_bac-type"/>
</dbReference>
<dbReference type="InterPro" id="IPR019972">
    <property type="entry name" value="Ribosomal_uL14_CS"/>
</dbReference>
<dbReference type="InterPro" id="IPR036853">
    <property type="entry name" value="Ribosomal_uL14_sf"/>
</dbReference>
<dbReference type="NCBIfam" id="TIGR01067">
    <property type="entry name" value="rplN_bact"/>
    <property type="match status" value="1"/>
</dbReference>
<dbReference type="PANTHER" id="PTHR11761">
    <property type="entry name" value="50S/60S RIBOSOMAL PROTEIN L14/L23"/>
    <property type="match status" value="1"/>
</dbReference>
<dbReference type="PANTHER" id="PTHR11761:SF3">
    <property type="entry name" value="LARGE RIBOSOMAL SUBUNIT PROTEIN UL14M"/>
    <property type="match status" value="1"/>
</dbReference>
<dbReference type="Pfam" id="PF00238">
    <property type="entry name" value="Ribosomal_L14"/>
    <property type="match status" value="1"/>
</dbReference>
<dbReference type="SMART" id="SM01374">
    <property type="entry name" value="Ribosomal_L14"/>
    <property type="match status" value="1"/>
</dbReference>
<dbReference type="SUPFAM" id="SSF50193">
    <property type="entry name" value="Ribosomal protein L14"/>
    <property type="match status" value="1"/>
</dbReference>
<dbReference type="PROSITE" id="PS00049">
    <property type="entry name" value="RIBOSOMAL_L14"/>
    <property type="match status" value="1"/>
</dbReference>
<name>RK14_OLIPU</name>
<geneLocation type="chloroplast"/>
<proteinExistence type="inferred from homology"/>